<sequence>MELTPHEARVIGVLLEKEITTPEQYPLSLNSLTSGCNQKTSREPVLSLSESEVQNTLDDLTKKRLISEQSGFGSRVVKYKHRFCNTEFSDLQLKSSELAVVCLLLLRGPQTPGELRTRSNRLHEFHDVSEVEATLNELQRRESPLVMLLAKEPGKREARYRQLFTEVDDTEIQSTPAQSTEYSITQHASGLEARVNTLEQQVAELTEQIKHLLDR</sequence>
<comment type="similarity">
    <text evidence="1">Belongs to the UPF0502 family.</text>
</comment>
<protein>
    <recommendedName>
        <fullName evidence="1">UPF0502 protein Shal_1801</fullName>
    </recommendedName>
</protein>
<accession>B0TQX1</accession>
<proteinExistence type="inferred from homology"/>
<dbReference type="EMBL" id="CP000931">
    <property type="protein sequence ID" value="ABZ76366.1"/>
    <property type="molecule type" value="Genomic_DNA"/>
</dbReference>
<dbReference type="RefSeq" id="WP_012276899.1">
    <property type="nucleotide sequence ID" value="NC_010334.1"/>
</dbReference>
<dbReference type="SMR" id="B0TQX1"/>
<dbReference type="STRING" id="458817.Shal_1801"/>
<dbReference type="KEGG" id="shl:Shal_1801"/>
<dbReference type="eggNOG" id="COG3132">
    <property type="taxonomic scope" value="Bacteria"/>
</dbReference>
<dbReference type="HOGENOM" id="CLU_057831_2_0_6"/>
<dbReference type="OrthoDB" id="9784785at2"/>
<dbReference type="Proteomes" id="UP000001317">
    <property type="component" value="Chromosome"/>
</dbReference>
<dbReference type="Gene3D" id="1.10.10.10">
    <property type="entry name" value="Winged helix-like DNA-binding domain superfamily/Winged helix DNA-binding domain"/>
    <property type="match status" value="2"/>
</dbReference>
<dbReference type="HAMAP" id="MF_01584">
    <property type="entry name" value="UPF0502"/>
    <property type="match status" value="1"/>
</dbReference>
<dbReference type="InterPro" id="IPR007432">
    <property type="entry name" value="DUF480"/>
</dbReference>
<dbReference type="InterPro" id="IPR036388">
    <property type="entry name" value="WH-like_DNA-bd_sf"/>
</dbReference>
<dbReference type="InterPro" id="IPR036390">
    <property type="entry name" value="WH_DNA-bd_sf"/>
</dbReference>
<dbReference type="PANTHER" id="PTHR38768">
    <property type="entry name" value="UPF0502 PROTEIN YCEH"/>
    <property type="match status" value="1"/>
</dbReference>
<dbReference type="PANTHER" id="PTHR38768:SF1">
    <property type="entry name" value="UPF0502 PROTEIN YCEH"/>
    <property type="match status" value="1"/>
</dbReference>
<dbReference type="Pfam" id="PF04337">
    <property type="entry name" value="DUF480"/>
    <property type="match status" value="1"/>
</dbReference>
<dbReference type="SUPFAM" id="SSF46785">
    <property type="entry name" value="Winged helix' DNA-binding domain"/>
    <property type="match status" value="2"/>
</dbReference>
<organism>
    <name type="scientific">Shewanella halifaxensis (strain HAW-EB4)</name>
    <dbReference type="NCBI Taxonomy" id="458817"/>
    <lineage>
        <taxon>Bacteria</taxon>
        <taxon>Pseudomonadati</taxon>
        <taxon>Pseudomonadota</taxon>
        <taxon>Gammaproteobacteria</taxon>
        <taxon>Alteromonadales</taxon>
        <taxon>Shewanellaceae</taxon>
        <taxon>Shewanella</taxon>
    </lineage>
</organism>
<reference key="1">
    <citation type="submission" date="2008-01" db="EMBL/GenBank/DDBJ databases">
        <title>Complete sequence of Shewanella halifaxensis HAW-EB4.</title>
        <authorList>
            <consortium name="US DOE Joint Genome Institute"/>
            <person name="Copeland A."/>
            <person name="Lucas S."/>
            <person name="Lapidus A."/>
            <person name="Glavina del Rio T."/>
            <person name="Dalin E."/>
            <person name="Tice H."/>
            <person name="Bruce D."/>
            <person name="Goodwin L."/>
            <person name="Pitluck S."/>
            <person name="Sims D."/>
            <person name="Brettin T."/>
            <person name="Detter J.C."/>
            <person name="Han C."/>
            <person name="Kuske C.R."/>
            <person name="Schmutz J."/>
            <person name="Larimer F."/>
            <person name="Land M."/>
            <person name="Hauser L."/>
            <person name="Kyrpides N."/>
            <person name="Kim E."/>
            <person name="Zhao J.-S."/>
            <person name="Richardson P."/>
        </authorList>
    </citation>
    <scope>NUCLEOTIDE SEQUENCE [LARGE SCALE GENOMIC DNA]</scope>
    <source>
        <strain>HAW-EB4</strain>
    </source>
</reference>
<feature type="chain" id="PRO_1000087948" description="UPF0502 protein Shal_1801">
    <location>
        <begin position="1"/>
        <end position="215"/>
    </location>
</feature>
<evidence type="ECO:0000255" key="1">
    <source>
        <dbReference type="HAMAP-Rule" id="MF_01584"/>
    </source>
</evidence>
<gene>
    <name type="ordered locus">Shal_1801</name>
</gene>
<name>Y1801_SHEHH</name>